<comment type="function">
    <text evidence="2 5">Pore-forming subunit of the mechanotransducer (MET) non-selective cation channel complex located at the tips of hair-cell stereocilia (PubMed:25114259). Highly permeable to calcium and likely transports monovalent cations (By similarity).</text>
</comment>
<comment type="catalytic activity">
    <reaction evidence="2">
        <text>Ca(2+)(in) = Ca(2+)(out)</text>
        <dbReference type="Rhea" id="RHEA:29671"/>
        <dbReference type="ChEBI" id="CHEBI:29108"/>
    </reaction>
</comment>
<comment type="subunit">
    <text evidence="5">Interacts specifically with isoform CD3 of PCDH15A (via cytoplasmic domain).</text>
</comment>
<comment type="subcellular location">
    <subcellularLocation>
        <location evidence="2">Cell membrane</location>
        <topology evidence="3">Multi-pass membrane protein</topology>
    </subcellularLocation>
    <text evidence="6">Localized to the hair bundles of the hair cells.</text>
</comment>
<comment type="tissue specificity">
    <text evidence="5">In adults, expression is restricted to the hair cells of inner ear and lateral line organ. Expressed at higher levels in the larval lateral-line neuromasts than in the larval inner ear. Expressed in the sensory hair cell patches of the ear at 4 days post fertilization (dpf).</text>
</comment>
<comment type="similarity">
    <text evidence="3">Belongs to the TMC family.</text>
</comment>
<gene>
    <name evidence="7 8" type="primary">tmc1</name>
    <name evidence="8" type="ORF">si:229d2.1</name>
</gene>
<keyword id="KW-1003">Cell membrane</keyword>
<keyword id="KW-0175">Coiled coil</keyword>
<keyword id="KW-0407">Ion channel</keyword>
<keyword id="KW-0406">Ion transport</keyword>
<keyword id="KW-0472">Membrane</keyword>
<keyword id="KW-1185">Reference proteome</keyword>
<keyword id="KW-0812">Transmembrane</keyword>
<keyword id="KW-1133">Transmembrane helix</keyword>
<keyword id="KW-0813">Transport</keyword>
<accession>F1QFU0</accession>
<accession>A0A076V3V4</accession>
<accession>A2BFV3</accession>
<organism>
    <name type="scientific">Danio rerio</name>
    <name type="common">Zebrafish</name>
    <name type="synonym">Brachydanio rerio</name>
    <dbReference type="NCBI Taxonomy" id="7955"/>
    <lineage>
        <taxon>Eukaryota</taxon>
        <taxon>Metazoa</taxon>
        <taxon>Chordata</taxon>
        <taxon>Craniata</taxon>
        <taxon>Vertebrata</taxon>
        <taxon>Euteleostomi</taxon>
        <taxon>Actinopterygii</taxon>
        <taxon>Neopterygii</taxon>
        <taxon>Teleostei</taxon>
        <taxon>Ostariophysi</taxon>
        <taxon>Cypriniformes</taxon>
        <taxon>Danionidae</taxon>
        <taxon>Danioninae</taxon>
        <taxon>Danio</taxon>
    </lineage>
</organism>
<name>TMC1_DANRE</name>
<feature type="chain" id="PRO_0000441914" description="Transmembrane channel-like protein 1">
    <location>
        <begin position="1"/>
        <end position="935"/>
    </location>
</feature>
<feature type="transmembrane region" description="Helical" evidence="1">
    <location>
        <begin position="303"/>
        <end position="340"/>
    </location>
</feature>
<feature type="transmembrane region" description="Helical" evidence="1">
    <location>
        <begin position="392"/>
        <end position="423"/>
    </location>
</feature>
<feature type="transmembrane region" description="Helical" evidence="1">
    <location>
        <begin position="480"/>
        <end position="510"/>
    </location>
</feature>
<feature type="transmembrane region" description="Helical" evidence="1">
    <location>
        <begin position="523"/>
        <end position="550"/>
    </location>
</feature>
<feature type="transmembrane region" description="Helical" evidence="1">
    <location>
        <begin position="555"/>
        <end position="589"/>
    </location>
</feature>
<feature type="transmembrane region" description="Helical" evidence="1">
    <location>
        <begin position="633"/>
        <end position="670"/>
    </location>
</feature>
<feature type="transmembrane region" description="Helical" evidence="1">
    <location>
        <begin position="690"/>
        <end position="710"/>
    </location>
</feature>
<feature type="transmembrane region" description="Helical" evidence="1">
    <location>
        <begin position="714"/>
        <end position="736"/>
    </location>
</feature>
<feature type="transmembrane region" description="Helical" evidence="1">
    <location>
        <begin position="751"/>
        <end position="774"/>
    </location>
</feature>
<feature type="transmembrane region" description="Helical" evidence="1">
    <location>
        <begin position="818"/>
        <end position="851"/>
    </location>
</feature>
<feature type="region of interest" description="Disordered" evidence="4">
    <location>
        <begin position="1"/>
        <end position="21"/>
    </location>
</feature>
<feature type="region of interest" description="Disordered" evidence="4">
    <location>
        <begin position="37"/>
        <end position="204"/>
    </location>
</feature>
<feature type="region of interest" description="Disordered" evidence="4">
    <location>
        <begin position="874"/>
        <end position="935"/>
    </location>
</feature>
<feature type="compositionally biased region" description="Basic and acidic residues" evidence="4">
    <location>
        <begin position="37"/>
        <end position="47"/>
    </location>
</feature>
<feature type="compositionally biased region" description="Basic and acidic residues" evidence="4">
    <location>
        <begin position="54"/>
        <end position="79"/>
    </location>
</feature>
<feature type="compositionally biased region" description="Basic and acidic residues" evidence="4">
    <location>
        <begin position="109"/>
        <end position="136"/>
    </location>
</feature>
<feature type="compositionally biased region" description="Basic and acidic residues" evidence="4">
    <location>
        <begin position="152"/>
        <end position="163"/>
    </location>
</feature>
<feature type="compositionally biased region" description="Basic and acidic residues" evidence="4">
    <location>
        <begin position="172"/>
        <end position="184"/>
    </location>
</feature>
<feature type="compositionally biased region" description="Basic and acidic residues" evidence="4">
    <location>
        <begin position="874"/>
        <end position="886"/>
    </location>
</feature>
<feature type="compositionally biased region" description="Polar residues" evidence="4">
    <location>
        <begin position="899"/>
        <end position="919"/>
    </location>
</feature>
<feature type="compositionally biased region" description="Polar residues" evidence="4">
    <location>
        <begin position="926"/>
        <end position="935"/>
    </location>
</feature>
<reference key="1">
    <citation type="journal article" date="2014" name="Proc. Natl. Acad. Sci. U.S.A.">
        <title>Tip-link protein protocadherin 15 interacts with transmembrane channel-like proteins TMC1 and TMC2.</title>
        <authorList>
            <person name="Maeda R."/>
            <person name="Kindt K.S."/>
            <person name="Mo W."/>
            <person name="Morgan C.P."/>
            <person name="Erickson T."/>
            <person name="Zhao H."/>
            <person name="Clemens-Grisham R."/>
            <person name="Barr-Gillespie P.G."/>
            <person name="Nicolson T."/>
        </authorList>
    </citation>
    <scope>NUCLEOTIDE SEQUENCE [MRNA]</scope>
    <scope>FUNCTION</scope>
    <scope>INTERACTION WITH PCDH15A</scope>
    <scope>TISSUE SPECIFICITY</scope>
    <scope>PHYLOGENETIC ANALYSIS</scope>
</reference>
<reference key="2">
    <citation type="journal article" date="2013" name="Nature">
        <title>The zebrafish reference genome sequence and its relationship to the human genome.</title>
        <authorList>
            <person name="Howe K."/>
            <person name="Clark M.D."/>
            <person name="Torroja C.F."/>
            <person name="Torrance J."/>
            <person name="Berthelot C."/>
            <person name="Muffato M."/>
            <person name="Collins J.E."/>
            <person name="Humphray S."/>
            <person name="McLaren K."/>
            <person name="Matthews L."/>
            <person name="McLaren S."/>
            <person name="Sealy I."/>
            <person name="Caccamo M."/>
            <person name="Churcher C."/>
            <person name="Scott C."/>
            <person name="Barrett J.C."/>
            <person name="Koch R."/>
            <person name="Rauch G.J."/>
            <person name="White S."/>
            <person name="Chow W."/>
            <person name="Kilian B."/>
            <person name="Quintais L.T."/>
            <person name="Guerra-Assuncao J.A."/>
            <person name="Zhou Y."/>
            <person name="Gu Y."/>
            <person name="Yen J."/>
            <person name="Vogel J.H."/>
            <person name="Eyre T."/>
            <person name="Redmond S."/>
            <person name="Banerjee R."/>
            <person name="Chi J."/>
            <person name="Fu B."/>
            <person name="Langley E."/>
            <person name="Maguire S.F."/>
            <person name="Laird G.K."/>
            <person name="Lloyd D."/>
            <person name="Kenyon E."/>
            <person name="Donaldson S."/>
            <person name="Sehra H."/>
            <person name="Almeida-King J."/>
            <person name="Loveland J."/>
            <person name="Trevanion S."/>
            <person name="Jones M."/>
            <person name="Quail M."/>
            <person name="Willey D."/>
            <person name="Hunt A."/>
            <person name="Burton J."/>
            <person name="Sims S."/>
            <person name="McLay K."/>
            <person name="Plumb B."/>
            <person name="Davis J."/>
            <person name="Clee C."/>
            <person name="Oliver K."/>
            <person name="Clark R."/>
            <person name="Riddle C."/>
            <person name="Elliot D."/>
            <person name="Threadgold G."/>
            <person name="Harden G."/>
            <person name="Ware D."/>
            <person name="Begum S."/>
            <person name="Mortimore B."/>
            <person name="Kerry G."/>
            <person name="Heath P."/>
            <person name="Phillimore B."/>
            <person name="Tracey A."/>
            <person name="Corby N."/>
            <person name="Dunn M."/>
            <person name="Johnson C."/>
            <person name="Wood J."/>
            <person name="Clark S."/>
            <person name="Pelan S."/>
            <person name="Griffiths G."/>
            <person name="Smith M."/>
            <person name="Glithero R."/>
            <person name="Howden P."/>
            <person name="Barker N."/>
            <person name="Lloyd C."/>
            <person name="Stevens C."/>
            <person name="Harley J."/>
            <person name="Holt K."/>
            <person name="Panagiotidis G."/>
            <person name="Lovell J."/>
            <person name="Beasley H."/>
            <person name="Henderson C."/>
            <person name="Gordon D."/>
            <person name="Auger K."/>
            <person name="Wright D."/>
            <person name="Collins J."/>
            <person name="Raisen C."/>
            <person name="Dyer L."/>
            <person name="Leung K."/>
            <person name="Robertson L."/>
            <person name="Ambridge K."/>
            <person name="Leongamornlert D."/>
            <person name="McGuire S."/>
            <person name="Gilderthorp R."/>
            <person name="Griffiths C."/>
            <person name="Manthravadi D."/>
            <person name="Nichol S."/>
            <person name="Barker G."/>
            <person name="Whitehead S."/>
            <person name="Kay M."/>
            <person name="Brown J."/>
            <person name="Murnane C."/>
            <person name="Gray E."/>
            <person name="Humphries M."/>
            <person name="Sycamore N."/>
            <person name="Barker D."/>
            <person name="Saunders D."/>
            <person name="Wallis J."/>
            <person name="Babbage A."/>
            <person name="Hammond S."/>
            <person name="Mashreghi-Mohammadi M."/>
            <person name="Barr L."/>
            <person name="Martin S."/>
            <person name="Wray P."/>
            <person name="Ellington A."/>
            <person name="Matthews N."/>
            <person name="Ellwood M."/>
            <person name="Woodmansey R."/>
            <person name="Clark G."/>
            <person name="Cooper J."/>
            <person name="Tromans A."/>
            <person name="Grafham D."/>
            <person name="Skuce C."/>
            <person name="Pandian R."/>
            <person name="Andrews R."/>
            <person name="Harrison E."/>
            <person name="Kimberley A."/>
            <person name="Garnett J."/>
            <person name="Fosker N."/>
            <person name="Hall R."/>
            <person name="Garner P."/>
            <person name="Kelly D."/>
            <person name="Bird C."/>
            <person name="Palmer S."/>
            <person name="Gehring I."/>
            <person name="Berger A."/>
            <person name="Dooley C.M."/>
            <person name="Ersan-Urun Z."/>
            <person name="Eser C."/>
            <person name="Geiger H."/>
            <person name="Geisler M."/>
            <person name="Karotki L."/>
            <person name="Kirn A."/>
            <person name="Konantz J."/>
            <person name="Konantz M."/>
            <person name="Oberlander M."/>
            <person name="Rudolph-Geiger S."/>
            <person name="Teucke M."/>
            <person name="Lanz C."/>
            <person name="Raddatz G."/>
            <person name="Osoegawa K."/>
            <person name="Zhu B."/>
            <person name="Rapp A."/>
            <person name="Widaa S."/>
            <person name="Langford C."/>
            <person name="Yang F."/>
            <person name="Schuster S.C."/>
            <person name="Carter N.P."/>
            <person name="Harrow J."/>
            <person name="Ning Z."/>
            <person name="Herrero J."/>
            <person name="Searle S.M."/>
            <person name="Enright A."/>
            <person name="Geisler R."/>
            <person name="Plasterk R.H."/>
            <person name="Lee C."/>
            <person name="Westerfield M."/>
            <person name="de Jong P.J."/>
            <person name="Zon L.I."/>
            <person name="Postlethwait J.H."/>
            <person name="Nusslein-Volhard C."/>
            <person name="Hubbard T.J."/>
            <person name="Roest Crollius H."/>
            <person name="Rogers J."/>
            <person name="Stemple D.L."/>
        </authorList>
    </citation>
    <scope>NUCLEOTIDE SEQUENCE [LARGE SCALE GENOMIC DNA]</scope>
    <source>
        <strain>Tuebingen</strain>
    </source>
</reference>
<reference key="3">
    <citation type="journal article" date="2017" name="Elife">
        <title>Integration of Tmc1/2 into the mechanotransduction complex in zebrafish hair cells is regulated by Transmembrane O-methyltransferase (Tomt).</title>
        <authorList>
            <person name="Erickson T."/>
            <person name="Morgan C.P."/>
            <person name="Olt J."/>
            <person name="Hardy K."/>
            <person name="Busch-Nentwich E."/>
            <person name="Maeda R."/>
            <person name="Clemens R."/>
            <person name="Krey J.F."/>
            <person name="Nechiporuk A."/>
            <person name="Barr-Gillespie P.G."/>
            <person name="Marcotti W."/>
            <person name="Nicolson T."/>
        </authorList>
    </citation>
    <scope>SUBCELLULAR LOCATION</scope>
</reference>
<proteinExistence type="evidence at protein level"/>
<dbReference type="EMBL" id="KM115406">
    <property type="protein sequence ID" value="AIK19895.1"/>
    <property type="molecule type" value="mRNA"/>
</dbReference>
<dbReference type="EMBL" id="BX296526">
    <property type="status" value="NOT_ANNOTATED_CDS"/>
    <property type="molecule type" value="Genomic_DNA"/>
</dbReference>
<dbReference type="SMR" id="F1QFU0"/>
<dbReference type="FunCoup" id="F1QFU0">
    <property type="interactions" value="131"/>
</dbReference>
<dbReference type="STRING" id="7955.ENSDARP00000089217"/>
<dbReference type="TCDB" id="1.A.17.4.13">
    <property type="family name" value="the calcium-dependent chloride channel (ca-clc) family"/>
</dbReference>
<dbReference type="PaxDb" id="7955-ENSDARP00000121310"/>
<dbReference type="AGR" id="ZFIN:ZDB-GENE-060526-261"/>
<dbReference type="ZFIN" id="ZDB-GENE-060526-261">
    <property type="gene designation" value="tmc1"/>
</dbReference>
<dbReference type="eggNOG" id="ENOG502QQGX">
    <property type="taxonomic scope" value="Eukaryota"/>
</dbReference>
<dbReference type="HOGENOM" id="CLU_013958_2_1_1"/>
<dbReference type="InParanoid" id="F1QFU0"/>
<dbReference type="TreeFam" id="TF313462"/>
<dbReference type="PRO" id="PR:F1QFU0"/>
<dbReference type="Proteomes" id="UP000000437">
    <property type="component" value="Unplaced"/>
</dbReference>
<dbReference type="GO" id="GO:0005886">
    <property type="term" value="C:plasma membrane"/>
    <property type="evidence" value="ECO:0007669"/>
    <property type="project" value="UniProtKB-SubCell"/>
</dbReference>
<dbReference type="GO" id="GO:0032421">
    <property type="term" value="C:stereocilium bundle"/>
    <property type="evidence" value="ECO:0000314"/>
    <property type="project" value="UniProtKB"/>
</dbReference>
<dbReference type="GO" id="GO:0005262">
    <property type="term" value="F:calcium channel activity"/>
    <property type="evidence" value="ECO:0000250"/>
    <property type="project" value="UniProtKB"/>
</dbReference>
<dbReference type="GO" id="GO:0008381">
    <property type="term" value="F:mechanosensitive monoatomic ion channel activity"/>
    <property type="evidence" value="ECO:0000250"/>
    <property type="project" value="UniProtKB"/>
</dbReference>
<dbReference type="GO" id="GO:0071260">
    <property type="term" value="P:cellular response to mechanical stimulus"/>
    <property type="evidence" value="ECO:0000315"/>
    <property type="project" value="ZFIN"/>
</dbReference>
<dbReference type="GO" id="GO:0050910">
    <property type="term" value="P:detection of mechanical stimulus involved in sensory perception of sound"/>
    <property type="evidence" value="ECO:0000250"/>
    <property type="project" value="UniProtKB"/>
</dbReference>
<dbReference type="GO" id="GO:0060005">
    <property type="term" value="P:vestibular reflex"/>
    <property type="evidence" value="ECO:0000318"/>
    <property type="project" value="GO_Central"/>
</dbReference>
<dbReference type="InterPro" id="IPR038900">
    <property type="entry name" value="TMC"/>
</dbReference>
<dbReference type="InterPro" id="IPR012496">
    <property type="entry name" value="TMC_dom"/>
</dbReference>
<dbReference type="PANTHER" id="PTHR23302:SF18">
    <property type="entry name" value="TRANSMEMBRANE CHANNEL-LIKE PROTEIN 1"/>
    <property type="match status" value="1"/>
</dbReference>
<dbReference type="PANTHER" id="PTHR23302">
    <property type="entry name" value="TRANSMEMBRANE CHANNEL-RELATED"/>
    <property type="match status" value="1"/>
</dbReference>
<dbReference type="Pfam" id="PF07810">
    <property type="entry name" value="TMC"/>
    <property type="match status" value="1"/>
</dbReference>
<evidence type="ECO:0000250" key="1">
    <source>
        <dbReference type="UniProtKB" id="D3KZG3"/>
    </source>
</evidence>
<evidence type="ECO:0000250" key="2">
    <source>
        <dbReference type="UniProtKB" id="Q8R4P5"/>
    </source>
</evidence>
<evidence type="ECO:0000255" key="3">
    <source>
        <dbReference type="RuleBase" id="RU310713"/>
    </source>
</evidence>
<evidence type="ECO:0000256" key="4">
    <source>
        <dbReference type="SAM" id="MobiDB-lite"/>
    </source>
</evidence>
<evidence type="ECO:0000269" key="5">
    <source>
    </source>
</evidence>
<evidence type="ECO:0000269" key="6">
    <source>
    </source>
</evidence>
<evidence type="ECO:0000303" key="7">
    <source>
    </source>
</evidence>
<evidence type="ECO:0000312" key="8">
    <source>
        <dbReference type="ZFIN" id="ZDB-GENE-060526-261"/>
    </source>
</evidence>
<sequence>MPRHKLIASESDVSIEVDEGKDKESCVYYVEVEENCERGKIKQASRDGKRRRERNGETRRKASEKRTNEGESKKAEKKHEKGHRTARKAGEKHGKRQRRKNAGEEDAEDKSSKEKKNMKNEKNKTLKLEEEKEKDVRKKKRKHVKNEEDETNHEKTKQHLKEEKRRKKRKKPETTSESESKSESESASESESKNSPAVGVLGSLTPEELENLKEAVEERKKLITQLKGKPWPMRRKLVVLRESQEFVEKYEGALGKGKGRKLYAYKVMMMKKWMKFQRDFENFKTACIPWEMKIKEIESHFGSSVASYFIFLRWMYGINMILFGLTFGLVMVPEALMGKPYGSLPRKTVPREEEASAMNFAVLWDFGGYAKYSVLFYGYYNSQRAIGWLKFRMPLSYFLVGVGTVAYSYMVVIRTMARNANEEGGGDDTSFNFSWKTFTSWDYLIGNPETADNKFASITTSFKEAIVEEQESRKDDNIHLTRFLRVLANFLVLCCLAGSGYLIYFVVRRSQKFALEGLENYGWWERNEVNMVMSLLGMFCPMLFDVISTLENYHPRIALQWQLGRIFALFLGNLYTFIIALMDAIQLKRAEEEIVKKNMTIWQANLYNGTVPDNSTAPPLTVHPADVPRGPCWETMVGQEFVRLIISDTMTTYITLLIGDFMRAVLVRFLNNCWCWDLEYGFPSYSEFDVSGNVLGLIFNQGMIWMGAFYAPCLPALNLLRLHVSMYLQCWAVMCCNVPQERVFKASGSNNFYMAMLLVILFLSTLPAIYTIVSIPPSFDCGPFSGKPRMFDVIQETLETDFPAWFSKVFSYASNPGLVLPFLLLLVLAIYYLQSTSKTYKRVNMELKKKLQAQNEENKKKNKLAALKAASDLEQARKAGEQRRNSISDLGVNEENPESHVSSSHTSRPPASRGHTSSGHLPGHPQQPQKNSKKR</sequence>
<protein>
    <recommendedName>
        <fullName evidence="7">Transmembrane channel-like protein 1</fullName>
    </recommendedName>
</protein>